<gene>
    <name evidence="1" type="primary">hisG</name>
    <name type="ordered locus">XCV1874</name>
</gene>
<evidence type="ECO:0000255" key="1">
    <source>
        <dbReference type="HAMAP-Rule" id="MF_00079"/>
    </source>
</evidence>
<dbReference type="EC" id="2.4.2.17" evidence="1"/>
<dbReference type="EMBL" id="AM039952">
    <property type="protein sequence ID" value="CAJ23551.1"/>
    <property type="molecule type" value="Genomic_DNA"/>
</dbReference>
<dbReference type="RefSeq" id="WP_011347184.1">
    <property type="nucleotide sequence ID" value="NZ_CP017190.1"/>
</dbReference>
<dbReference type="SMR" id="Q3BUF8"/>
<dbReference type="STRING" id="456327.BJD11_13055"/>
<dbReference type="KEGG" id="xcv:XCV1874"/>
<dbReference type="eggNOG" id="COG0040">
    <property type="taxonomic scope" value="Bacteria"/>
</dbReference>
<dbReference type="HOGENOM" id="CLU_038115_1_0_6"/>
<dbReference type="UniPathway" id="UPA00031">
    <property type="reaction ID" value="UER00006"/>
</dbReference>
<dbReference type="Proteomes" id="UP000007069">
    <property type="component" value="Chromosome"/>
</dbReference>
<dbReference type="GO" id="GO:0005737">
    <property type="term" value="C:cytoplasm"/>
    <property type="evidence" value="ECO:0007669"/>
    <property type="project" value="UniProtKB-SubCell"/>
</dbReference>
<dbReference type="GO" id="GO:0005524">
    <property type="term" value="F:ATP binding"/>
    <property type="evidence" value="ECO:0007669"/>
    <property type="project" value="UniProtKB-KW"/>
</dbReference>
<dbReference type="GO" id="GO:0003879">
    <property type="term" value="F:ATP phosphoribosyltransferase activity"/>
    <property type="evidence" value="ECO:0007669"/>
    <property type="project" value="UniProtKB-UniRule"/>
</dbReference>
<dbReference type="GO" id="GO:0000287">
    <property type="term" value="F:magnesium ion binding"/>
    <property type="evidence" value="ECO:0007669"/>
    <property type="project" value="UniProtKB-UniRule"/>
</dbReference>
<dbReference type="GO" id="GO:0000105">
    <property type="term" value="P:L-histidine biosynthetic process"/>
    <property type="evidence" value="ECO:0007669"/>
    <property type="project" value="UniProtKB-UniRule"/>
</dbReference>
<dbReference type="CDD" id="cd13592">
    <property type="entry name" value="PBP2_HisGL2"/>
    <property type="match status" value="1"/>
</dbReference>
<dbReference type="FunFam" id="3.40.190.10:FF:000008">
    <property type="entry name" value="ATP phosphoribosyltransferase"/>
    <property type="match status" value="1"/>
</dbReference>
<dbReference type="Gene3D" id="3.30.70.120">
    <property type="match status" value="1"/>
</dbReference>
<dbReference type="Gene3D" id="3.40.190.10">
    <property type="entry name" value="Periplasmic binding protein-like II"/>
    <property type="match status" value="2"/>
</dbReference>
<dbReference type="HAMAP" id="MF_00079">
    <property type="entry name" value="HisG_Long"/>
    <property type="match status" value="1"/>
</dbReference>
<dbReference type="InterPro" id="IPR020621">
    <property type="entry name" value="ATP-PRT_HisG_long"/>
</dbReference>
<dbReference type="InterPro" id="IPR013820">
    <property type="entry name" value="ATP_PRibTrfase_cat"/>
</dbReference>
<dbReference type="InterPro" id="IPR018198">
    <property type="entry name" value="ATP_PRibTrfase_CS"/>
</dbReference>
<dbReference type="InterPro" id="IPR001348">
    <property type="entry name" value="ATP_PRibTrfase_HisG"/>
</dbReference>
<dbReference type="InterPro" id="IPR013115">
    <property type="entry name" value="HisG_C"/>
</dbReference>
<dbReference type="InterPro" id="IPR015867">
    <property type="entry name" value="N-reg_PII/ATP_PRibTrfase_C"/>
</dbReference>
<dbReference type="NCBIfam" id="TIGR00070">
    <property type="entry name" value="hisG"/>
    <property type="match status" value="1"/>
</dbReference>
<dbReference type="NCBIfam" id="TIGR03455">
    <property type="entry name" value="HisG_C-term"/>
    <property type="match status" value="1"/>
</dbReference>
<dbReference type="PANTHER" id="PTHR21403:SF8">
    <property type="entry name" value="ATP PHOSPHORIBOSYLTRANSFERASE"/>
    <property type="match status" value="1"/>
</dbReference>
<dbReference type="PANTHER" id="PTHR21403">
    <property type="entry name" value="ATP PHOSPHORIBOSYLTRANSFERASE ATP-PRTASE"/>
    <property type="match status" value="1"/>
</dbReference>
<dbReference type="Pfam" id="PF01634">
    <property type="entry name" value="HisG"/>
    <property type="match status" value="1"/>
</dbReference>
<dbReference type="SUPFAM" id="SSF53850">
    <property type="entry name" value="Periplasmic binding protein-like II"/>
    <property type="match status" value="1"/>
</dbReference>
<dbReference type="PROSITE" id="PS01316">
    <property type="entry name" value="ATP_P_PHORIBOSYLTR"/>
    <property type="match status" value="1"/>
</dbReference>
<organism>
    <name type="scientific">Xanthomonas euvesicatoria pv. vesicatoria (strain 85-10)</name>
    <name type="common">Xanthomonas campestris pv. vesicatoria</name>
    <dbReference type="NCBI Taxonomy" id="316273"/>
    <lineage>
        <taxon>Bacteria</taxon>
        <taxon>Pseudomonadati</taxon>
        <taxon>Pseudomonadota</taxon>
        <taxon>Gammaproteobacteria</taxon>
        <taxon>Lysobacterales</taxon>
        <taxon>Lysobacteraceae</taxon>
        <taxon>Xanthomonas</taxon>
    </lineage>
</organism>
<comment type="function">
    <text evidence="1">Catalyzes the condensation of ATP and 5-phosphoribose 1-diphosphate to form N'-(5'-phosphoribosyl)-ATP (PR-ATP). Has a crucial role in the pathway because the rate of histidine biosynthesis seems to be controlled primarily by regulation of HisG enzymatic activity.</text>
</comment>
<comment type="catalytic activity">
    <reaction evidence="1">
        <text>1-(5-phospho-beta-D-ribosyl)-ATP + diphosphate = 5-phospho-alpha-D-ribose 1-diphosphate + ATP</text>
        <dbReference type="Rhea" id="RHEA:18473"/>
        <dbReference type="ChEBI" id="CHEBI:30616"/>
        <dbReference type="ChEBI" id="CHEBI:33019"/>
        <dbReference type="ChEBI" id="CHEBI:58017"/>
        <dbReference type="ChEBI" id="CHEBI:73183"/>
        <dbReference type="EC" id="2.4.2.17"/>
    </reaction>
</comment>
<comment type="cofactor">
    <cofactor evidence="1">
        <name>Mg(2+)</name>
        <dbReference type="ChEBI" id="CHEBI:18420"/>
    </cofactor>
</comment>
<comment type="activity regulation">
    <text evidence="1">Feedback inhibited by histidine.</text>
</comment>
<comment type="pathway">
    <text evidence="1">Amino-acid biosynthesis; L-histidine biosynthesis; L-histidine from 5-phospho-alpha-D-ribose 1-diphosphate: step 1/9.</text>
</comment>
<comment type="subcellular location">
    <subcellularLocation>
        <location evidence="1">Cytoplasm</location>
    </subcellularLocation>
</comment>
<comment type="similarity">
    <text evidence="1">Belongs to the ATP phosphoribosyltransferase family. Long subfamily.</text>
</comment>
<sequence>MSASTAAPARDRLRIAIQKSGRLAEPARSLLAACGLSWRQSRDKLFCYGESLPVDLLLVRDDDIPGLIADGVCDLGIVGQNELEEQAAERRRNGLPAAYHAVRGVGFGQCRLMLAVPEEWDWHGVGQLAGKRIATSYPAILADWLERQGIDATVVELSGSVEIAPRLGTADLICDLVSSGATLAANQLKPVELVMESEAVLAGAVREPADARAGLLAMLLRRMDGVLKLRDSKLLMFRAEQTNVDALRRLLPDADPLVQLPDDGNGALRLQTMCHGAVTWQRLEELERAGAQGLMVLTVERSLA</sequence>
<proteinExistence type="inferred from homology"/>
<reference key="1">
    <citation type="journal article" date="2005" name="J. Bacteriol.">
        <title>Insights into genome plasticity and pathogenicity of the plant pathogenic Bacterium Xanthomonas campestris pv. vesicatoria revealed by the complete genome sequence.</title>
        <authorList>
            <person name="Thieme F."/>
            <person name="Koebnik R."/>
            <person name="Bekel T."/>
            <person name="Berger C."/>
            <person name="Boch J."/>
            <person name="Buettner D."/>
            <person name="Caldana C."/>
            <person name="Gaigalat L."/>
            <person name="Goesmann A."/>
            <person name="Kay S."/>
            <person name="Kirchner O."/>
            <person name="Lanz C."/>
            <person name="Linke B."/>
            <person name="McHardy A.C."/>
            <person name="Meyer F."/>
            <person name="Mittenhuber G."/>
            <person name="Nies D.H."/>
            <person name="Niesbach-Kloesgen U."/>
            <person name="Patschkowski T."/>
            <person name="Rueckert C."/>
            <person name="Rupp O."/>
            <person name="Schneiker S."/>
            <person name="Schuster S.C."/>
            <person name="Vorhoelter F.J."/>
            <person name="Weber E."/>
            <person name="Puehler A."/>
            <person name="Bonas U."/>
            <person name="Bartels D."/>
            <person name="Kaiser O."/>
        </authorList>
    </citation>
    <scope>NUCLEOTIDE SEQUENCE [LARGE SCALE GENOMIC DNA]</scope>
    <source>
        <strain>85-10</strain>
    </source>
</reference>
<feature type="chain" id="PRO_1000004514" description="ATP phosphoribosyltransferase">
    <location>
        <begin position="1"/>
        <end position="304"/>
    </location>
</feature>
<protein>
    <recommendedName>
        <fullName evidence="1">ATP phosphoribosyltransferase</fullName>
        <shortName evidence="1">ATP-PRT</shortName>
        <shortName evidence="1">ATP-PRTase</shortName>
        <ecNumber evidence="1">2.4.2.17</ecNumber>
    </recommendedName>
</protein>
<accession>Q3BUF8</accession>
<keyword id="KW-0028">Amino-acid biosynthesis</keyword>
<keyword id="KW-0067">ATP-binding</keyword>
<keyword id="KW-0963">Cytoplasm</keyword>
<keyword id="KW-0328">Glycosyltransferase</keyword>
<keyword id="KW-0368">Histidine biosynthesis</keyword>
<keyword id="KW-0460">Magnesium</keyword>
<keyword id="KW-0479">Metal-binding</keyword>
<keyword id="KW-0547">Nucleotide-binding</keyword>
<keyword id="KW-0808">Transferase</keyword>
<name>HIS1_XANE5</name>